<gene>
    <name evidence="1" type="primary">trpD</name>
    <name type="ordered locus">YPTB2128</name>
</gene>
<protein>
    <recommendedName>
        <fullName evidence="1">Anthranilate phosphoribosyltransferase</fullName>
        <ecNumber evidence="1">2.4.2.18</ecNumber>
    </recommendedName>
</protein>
<organism>
    <name type="scientific">Yersinia pseudotuberculosis serotype I (strain IP32953)</name>
    <dbReference type="NCBI Taxonomy" id="273123"/>
    <lineage>
        <taxon>Bacteria</taxon>
        <taxon>Pseudomonadati</taxon>
        <taxon>Pseudomonadota</taxon>
        <taxon>Gammaproteobacteria</taxon>
        <taxon>Enterobacterales</taxon>
        <taxon>Yersiniaceae</taxon>
        <taxon>Yersinia</taxon>
    </lineage>
</organism>
<comment type="function">
    <text evidence="1">Catalyzes the transfer of the phosphoribosyl group of 5-phosphorylribose-1-pyrophosphate (PRPP) to anthranilate to yield N-(5'-phosphoribosyl)-anthranilate (PRA).</text>
</comment>
<comment type="catalytic activity">
    <reaction evidence="1">
        <text>N-(5-phospho-beta-D-ribosyl)anthranilate + diphosphate = 5-phospho-alpha-D-ribose 1-diphosphate + anthranilate</text>
        <dbReference type="Rhea" id="RHEA:11768"/>
        <dbReference type="ChEBI" id="CHEBI:16567"/>
        <dbReference type="ChEBI" id="CHEBI:18277"/>
        <dbReference type="ChEBI" id="CHEBI:33019"/>
        <dbReference type="ChEBI" id="CHEBI:58017"/>
        <dbReference type="EC" id="2.4.2.18"/>
    </reaction>
</comment>
<comment type="cofactor">
    <cofactor evidence="1">
        <name>Mg(2+)</name>
        <dbReference type="ChEBI" id="CHEBI:18420"/>
    </cofactor>
    <text evidence="1">Binds 2 magnesium ions per monomer.</text>
</comment>
<comment type="pathway">
    <text evidence="1">Amino-acid biosynthesis; L-tryptophan biosynthesis; L-tryptophan from chorismate: step 2/5.</text>
</comment>
<comment type="subunit">
    <text evidence="1">Homodimer.</text>
</comment>
<comment type="similarity">
    <text evidence="1">Belongs to the anthranilate phosphoribosyltransferase family.</text>
</comment>
<name>TRPD_YERPS</name>
<reference key="1">
    <citation type="journal article" date="2004" name="Proc. Natl. Acad. Sci. U.S.A.">
        <title>Insights into the evolution of Yersinia pestis through whole-genome comparison with Yersinia pseudotuberculosis.</title>
        <authorList>
            <person name="Chain P.S.G."/>
            <person name="Carniel E."/>
            <person name="Larimer F.W."/>
            <person name="Lamerdin J."/>
            <person name="Stoutland P.O."/>
            <person name="Regala W.M."/>
            <person name="Georgescu A.M."/>
            <person name="Vergez L.M."/>
            <person name="Land M.L."/>
            <person name="Motin V.L."/>
            <person name="Brubaker R.R."/>
            <person name="Fowler J."/>
            <person name="Hinnebusch J."/>
            <person name="Marceau M."/>
            <person name="Medigue C."/>
            <person name="Simonet M."/>
            <person name="Chenal-Francisque V."/>
            <person name="Souza B."/>
            <person name="Dacheux D."/>
            <person name="Elliott J.M."/>
            <person name="Derbise A."/>
            <person name="Hauser L.J."/>
            <person name="Garcia E."/>
        </authorList>
    </citation>
    <scope>NUCLEOTIDE SEQUENCE [LARGE SCALE GENOMIC DNA]</scope>
    <source>
        <strain>IP32953</strain>
    </source>
</reference>
<sequence>MQHLFEKLFRAESMSQEESQQLFAAIVRGELEPSQLAAVLISMKVRGETPAEIAGAAQALLADAQHFPRPDYLFADIVGTGGDGTNSINISTASAFVAASCGVKVAKHGNRSVSSRSGSSDLLAAFGIRLDMSAEQSRLALDDLGVCFLFAPQYHTGFRHAMPVRQQLKTRTLFNVLGPLINPARPPLALIGVYSPELVLPIAQTLKVLGYQRAAVVHGGGMDEVAIHAPTQVAELNNGSIESYQLTPEDFGLNRYPLAALQGGMPEENRDILARLLQGKGETAHAAAVAANVALLLKLYGQENLRHNAQQALEMIHSGQAFDRVTALAARG</sequence>
<dbReference type="EC" id="2.4.2.18" evidence="1"/>
<dbReference type="EMBL" id="BX936398">
    <property type="protein sequence ID" value="CAH21366.1"/>
    <property type="molecule type" value="Genomic_DNA"/>
</dbReference>
<dbReference type="SMR" id="Q66AK2"/>
<dbReference type="KEGG" id="ypo:BZ17_334"/>
<dbReference type="KEGG" id="yps:YPTB2128"/>
<dbReference type="PATRIC" id="fig|273123.14.peg.354"/>
<dbReference type="UniPathway" id="UPA00035">
    <property type="reaction ID" value="UER00041"/>
</dbReference>
<dbReference type="Proteomes" id="UP000001011">
    <property type="component" value="Chromosome"/>
</dbReference>
<dbReference type="GO" id="GO:0005829">
    <property type="term" value="C:cytosol"/>
    <property type="evidence" value="ECO:0007669"/>
    <property type="project" value="TreeGrafter"/>
</dbReference>
<dbReference type="GO" id="GO:0004048">
    <property type="term" value="F:anthranilate phosphoribosyltransferase activity"/>
    <property type="evidence" value="ECO:0007669"/>
    <property type="project" value="UniProtKB-UniRule"/>
</dbReference>
<dbReference type="GO" id="GO:0000287">
    <property type="term" value="F:magnesium ion binding"/>
    <property type="evidence" value="ECO:0007669"/>
    <property type="project" value="UniProtKB-UniRule"/>
</dbReference>
<dbReference type="GO" id="GO:0000162">
    <property type="term" value="P:L-tryptophan biosynthetic process"/>
    <property type="evidence" value="ECO:0007669"/>
    <property type="project" value="UniProtKB-UniRule"/>
</dbReference>
<dbReference type="FunFam" id="1.20.970.10:FF:000003">
    <property type="entry name" value="Anthranilate phosphoribosyltransferase"/>
    <property type="match status" value="1"/>
</dbReference>
<dbReference type="FunFam" id="3.40.1030.10:FF:000002">
    <property type="entry name" value="Anthranilate phosphoribosyltransferase"/>
    <property type="match status" value="1"/>
</dbReference>
<dbReference type="Gene3D" id="3.40.1030.10">
    <property type="entry name" value="Nucleoside phosphorylase/phosphoribosyltransferase catalytic domain"/>
    <property type="match status" value="1"/>
</dbReference>
<dbReference type="Gene3D" id="1.20.970.10">
    <property type="entry name" value="Transferase, Pyrimidine Nucleoside Phosphorylase, Chain C"/>
    <property type="match status" value="1"/>
</dbReference>
<dbReference type="HAMAP" id="MF_00211">
    <property type="entry name" value="TrpD"/>
    <property type="match status" value="1"/>
</dbReference>
<dbReference type="InterPro" id="IPR005940">
    <property type="entry name" value="Anthranilate_Pribosyl_Tfrase"/>
</dbReference>
<dbReference type="InterPro" id="IPR000312">
    <property type="entry name" value="Glycosyl_Trfase_fam3"/>
</dbReference>
<dbReference type="InterPro" id="IPR017459">
    <property type="entry name" value="Glycosyl_Trfase_fam3_N_dom"/>
</dbReference>
<dbReference type="InterPro" id="IPR036320">
    <property type="entry name" value="Glycosyl_Trfase_fam3_N_dom_sf"/>
</dbReference>
<dbReference type="InterPro" id="IPR035902">
    <property type="entry name" value="Nuc_phospho_transferase"/>
</dbReference>
<dbReference type="NCBIfam" id="TIGR01245">
    <property type="entry name" value="trpD"/>
    <property type="match status" value="1"/>
</dbReference>
<dbReference type="PANTHER" id="PTHR43285">
    <property type="entry name" value="ANTHRANILATE PHOSPHORIBOSYLTRANSFERASE"/>
    <property type="match status" value="1"/>
</dbReference>
<dbReference type="PANTHER" id="PTHR43285:SF2">
    <property type="entry name" value="ANTHRANILATE PHOSPHORIBOSYLTRANSFERASE"/>
    <property type="match status" value="1"/>
</dbReference>
<dbReference type="Pfam" id="PF02885">
    <property type="entry name" value="Glycos_trans_3N"/>
    <property type="match status" value="1"/>
</dbReference>
<dbReference type="Pfam" id="PF00591">
    <property type="entry name" value="Glycos_transf_3"/>
    <property type="match status" value="1"/>
</dbReference>
<dbReference type="SUPFAM" id="SSF52418">
    <property type="entry name" value="Nucleoside phosphorylase/phosphoribosyltransferase catalytic domain"/>
    <property type="match status" value="1"/>
</dbReference>
<dbReference type="SUPFAM" id="SSF47648">
    <property type="entry name" value="Nucleoside phosphorylase/phosphoribosyltransferase N-terminal domain"/>
    <property type="match status" value="1"/>
</dbReference>
<keyword id="KW-0028">Amino-acid biosynthesis</keyword>
<keyword id="KW-0057">Aromatic amino acid biosynthesis</keyword>
<keyword id="KW-0328">Glycosyltransferase</keyword>
<keyword id="KW-0460">Magnesium</keyword>
<keyword id="KW-0479">Metal-binding</keyword>
<keyword id="KW-0808">Transferase</keyword>
<keyword id="KW-0822">Tryptophan biosynthesis</keyword>
<evidence type="ECO:0000255" key="1">
    <source>
        <dbReference type="HAMAP-Rule" id="MF_00211"/>
    </source>
</evidence>
<feature type="chain" id="PRO_0000227200" description="Anthranilate phosphoribosyltransferase">
    <location>
        <begin position="1"/>
        <end position="332"/>
    </location>
</feature>
<feature type="binding site" evidence="1">
    <location>
        <position position="79"/>
    </location>
    <ligand>
        <name>5-phospho-alpha-D-ribose 1-diphosphate</name>
        <dbReference type="ChEBI" id="CHEBI:58017"/>
    </ligand>
</feature>
<feature type="binding site" evidence="1">
    <location>
        <position position="79"/>
    </location>
    <ligand>
        <name>anthranilate</name>
        <dbReference type="ChEBI" id="CHEBI:16567"/>
        <label>1</label>
    </ligand>
</feature>
<feature type="binding site" evidence="1">
    <location>
        <begin position="82"/>
        <end position="83"/>
    </location>
    <ligand>
        <name>5-phospho-alpha-D-ribose 1-diphosphate</name>
        <dbReference type="ChEBI" id="CHEBI:58017"/>
    </ligand>
</feature>
<feature type="binding site" evidence="1">
    <location>
        <position position="87"/>
    </location>
    <ligand>
        <name>5-phospho-alpha-D-ribose 1-diphosphate</name>
        <dbReference type="ChEBI" id="CHEBI:58017"/>
    </ligand>
</feature>
<feature type="binding site" evidence="1">
    <location>
        <begin position="89"/>
        <end position="92"/>
    </location>
    <ligand>
        <name>5-phospho-alpha-D-ribose 1-diphosphate</name>
        <dbReference type="ChEBI" id="CHEBI:58017"/>
    </ligand>
</feature>
<feature type="binding site" evidence="1">
    <location>
        <position position="91"/>
    </location>
    <ligand>
        <name>Mg(2+)</name>
        <dbReference type="ChEBI" id="CHEBI:18420"/>
        <label>1</label>
    </ligand>
</feature>
<feature type="binding site" evidence="1">
    <location>
        <begin position="107"/>
        <end position="115"/>
    </location>
    <ligand>
        <name>5-phospho-alpha-D-ribose 1-diphosphate</name>
        <dbReference type="ChEBI" id="CHEBI:58017"/>
    </ligand>
</feature>
<feature type="binding site" evidence="1">
    <location>
        <position position="110"/>
    </location>
    <ligand>
        <name>anthranilate</name>
        <dbReference type="ChEBI" id="CHEBI:16567"/>
        <label>1</label>
    </ligand>
</feature>
<feature type="binding site" evidence="1">
    <location>
        <position position="119"/>
    </location>
    <ligand>
        <name>5-phospho-alpha-D-ribose 1-diphosphate</name>
        <dbReference type="ChEBI" id="CHEBI:58017"/>
    </ligand>
</feature>
<feature type="binding site" evidence="1">
    <location>
        <position position="165"/>
    </location>
    <ligand>
        <name>anthranilate</name>
        <dbReference type="ChEBI" id="CHEBI:16567"/>
        <label>2</label>
    </ligand>
</feature>
<feature type="binding site" evidence="1">
    <location>
        <position position="223"/>
    </location>
    <ligand>
        <name>Mg(2+)</name>
        <dbReference type="ChEBI" id="CHEBI:18420"/>
        <label>2</label>
    </ligand>
</feature>
<feature type="binding site" evidence="1">
    <location>
        <position position="224"/>
    </location>
    <ligand>
        <name>Mg(2+)</name>
        <dbReference type="ChEBI" id="CHEBI:18420"/>
        <label>1</label>
    </ligand>
</feature>
<feature type="binding site" evidence="1">
    <location>
        <position position="224"/>
    </location>
    <ligand>
        <name>Mg(2+)</name>
        <dbReference type="ChEBI" id="CHEBI:18420"/>
        <label>2</label>
    </ligand>
</feature>
<proteinExistence type="inferred from homology"/>
<accession>Q66AK2</accession>